<name>VNPA_OXYMI</name>
<feature type="peptide" id="PRO_0000045069" description="Natriuretic peptide TNPa" evidence="1">
    <location>
        <begin position="1"/>
        <end position="35"/>
    </location>
</feature>
<feature type="disulfide bond" evidence="1">
    <location>
        <begin position="9"/>
        <end position="25"/>
    </location>
</feature>
<protein>
    <recommendedName>
        <fullName evidence="4">Natriuretic peptide TNPa</fullName>
        <shortName evidence="3">TNP-a</shortName>
    </recommendedName>
    <alternativeName>
        <fullName>Taipan natriuretic peptide</fullName>
    </alternativeName>
    <alternativeName>
        <fullName>Venom natriuretic peptide OxsSNPa</fullName>
    </alternativeName>
</protein>
<comment type="function">
    <text evidence="1 2">Snake venom natriuretic peptide that exhibits vasoactive and probable hypotensive activity (PubMed:15652496). Is only weakly active on natriuretic peptide receptor-C (NPR3) (PubMed:15652496). Stimulates cGMP production through the natriuretic peptide receptor 1 (NPR1) with moderate potencies for the rat NPR1 (EC(50)=2020 nM), and very weak potencies over human NPR1 (15% activation at 10 uM) (PubMed:37049825). In vivo, does not impact systolic and diastolic blood pressure, as well as heart rate, when intravenously injected in conscious rabbits (PubMed:37049825). Does not affect the bradycardia due to cardiac afferent stimulation (Bezold-Jarisch reflex) (PubMed:37049825).</text>
</comment>
<comment type="subcellular location">
    <subcellularLocation>
        <location evidence="1">Secreted</location>
    </subcellularLocation>
</comment>
<comment type="tissue specificity">
    <text evidence="6">Expressed by the venom gland.</text>
</comment>
<comment type="mass spectrometry" mass="3651.0" method="Electrospray" evidence="1"/>
<comment type="similarity">
    <text evidence="5">Belongs to the natriuretic peptide family.</text>
</comment>
<dbReference type="SMR" id="P83224"/>
<dbReference type="GO" id="GO:0005576">
    <property type="term" value="C:extracellular region"/>
    <property type="evidence" value="ECO:0007669"/>
    <property type="project" value="UniProtKB-SubCell"/>
</dbReference>
<dbReference type="GO" id="GO:0005179">
    <property type="term" value="F:hormone activity"/>
    <property type="evidence" value="ECO:0007669"/>
    <property type="project" value="InterPro"/>
</dbReference>
<dbReference type="GO" id="GO:0090729">
    <property type="term" value="F:toxin activity"/>
    <property type="evidence" value="ECO:0007669"/>
    <property type="project" value="UniProtKB-KW"/>
</dbReference>
<dbReference type="GO" id="GO:0008217">
    <property type="term" value="P:regulation of blood pressure"/>
    <property type="evidence" value="ECO:0007669"/>
    <property type="project" value="UniProtKB-KW"/>
</dbReference>
<dbReference type="GO" id="GO:0042311">
    <property type="term" value="P:vasodilation"/>
    <property type="evidence" value="ECO:0007669"/>
    <property type="project" value="UniProtKB-KW"/>
</dbReference>
<dbReference type="InterPro" id="IPR000663">
    <property type="entry name" value="Natr_peptide"/>
</dbReference>
<dbReference type="InterPro" id="IPR030480">
    <property type="entry name" value="Natr_peptide_CS"/>
</dbReference>
<dbReference type="Pfam" id="PF00212">
    <property type="entry name" value="ANP"/>
    <property type="match status" value="1"/>
</dbReference>
<dbReference type="SMART" id="SM00183">
    <property type="entry name" value="NAT_PEP"/>
    <property type="match status" value="1"/>
</dbReference>
<dbReference type="PROSITE" id="PS00263">
    <property type="entry name" value="NATRIURETIC_PEPTIDE"/>
    <property type="match status" value="1"/>
</dbReference>
<accession>P83224</accession>
<keyword id="KW-0903">Direct protein sequencing</keyword>
<keyword id="KW-1015">Disulfide bond</keyword>
<keyword id="KW-0382">Hypotensive agent</keyword>
<keyword id="KW-0964">Secreted</keyword>
<keyword id="KW-0800">Toxin</keyword>
<keyword id="KW-0838">Vasoactive</keyword>
<keyword id="KW-0840">Vasodilator</keyword>
<organism>
    <name type="scientific">Oxyuranus microlepidotus</name>
    <name type="common">Inland taipan</name>
    <name type="synonym">Diemenia microlepidota</name>
    <dbReference type="NCBI Taxonomy" id="111177"/>
    <lineage>
        <taxon>Eukaryota</taxon>
        <taxon>Metazoa</taxon>
        <taxon>Chordata</taxon>
        <taxon>Craniata</taxon>
        <taxon>Vertebrata</taxon>
        <taxon>Euteleostomi</taxon>
        <taxon>Lepidosauria</taxon>
        <taxon>Squamata</taxon>
        <taxon>Bifurcata</taxon>
        <taxon>Unidentata</taxon>
        <taxon>Episquamata</taxon>
        <taxon>Toxicofera</taxon>
        <taxon>Serpentes</taxon>
        <taxon>Colubroidea</taxon>
        <taxon>Elapidae</taxon>
        <taxon>Hydrophiinae</taxon>
        <taxon>Oxyuranus</taxon>
    </lineage>
</organism>
<reference key="1">
    <citation type="journal article" date="2005" name="Biochem. Biophys. Res. Commun.">
        <title>Novel natriuretic peptides from the venom of the inland taipan (Oxyuranus microlepidotus): isolation, chemical and biological characterisation.</title>
        <authorList>
            <person name="Fry B.G."/>
            <person name="Wickramaratana J.C."/>
            <person name="Lemme S."/>
            <person name="Beuve A."/>
            <person name="Garbers D."/>
            <person name="Hodgson W.C."/>
            <person name="Alewood P.F."/>
        </authorList>
    </citation>
    <scope>PROTEIN SEQUENCE</scope>
    <scope>FUNCTION</scope>
    <scope>SUBCELLULAR LOCATION</scope>
    <scope>MASS SPECTROMETRY</scope>
    <scope>DISULFIDE BOND</scope>
    <source>
        <tissue>Venom</tissue>
    </source>
</reference>
<reference key="2">
    <citation type="journal article" date="2023" name="Molecules">
        <title>Taipan natriuretic peptides are potent and selective agonists for the natriuretic peptide receptor A.</title>
        <authorList>
            <person name="Vink S."/>
            <person name="Akondi K.B."/>
            <person name="Jin J."/>
            <person name="Poth K."/>
            <person name="Torres A.M."/>
            <person name="Kuchel P.W."/>
            <person name="Burke S.L."/>
            <person name="Head G.A."/>
            <person name="Alewood P.F."/>
        </authorList>
    </citation>
    <scope>FUNCTION</scope>
    <scope>SYNTHESIS</scope>
    <scope>BIOASSAY</scope>
</reference>
<sequence length="35" mass="3653">SDSKIGDGCFGLPLDHIGSVSGLGCNRPVQNRPKK</sequence>
<evidence type="ECO:0000269" key="1">
    <source>
    </source>
</evidence>
<evidence type="ECO:0000269" key="2">
    <source>
    </source>
</evidence>
<evidence type="ECO:0000303" key="3">
    <source>
    </source>
</evidence>
<evidence type="ECO:0000303" key="4">
    <source>
    </source>
</evidence>
<evidence type="ECO:0000305" key="5"/>
<evidence type="ECO:0000305" key="6">
    <source>
    </source>
</evidence>
<proteinExistence type="evidence at protein level"/>